<sequence>MRSAQVYRWQIPMDAGVVLRDRRLKTRDGLYVCLREGEREGWGEISPLPGFSQETWEEAQSVLLAWVNNWLAGDCELPQMPSVAFGVSCALAELADTLPQAANYRAAPLCNGDPDDLILKLADMPGEKVAKVKVGLYEAVRDGMVVNLLLEAIPDLHLRLDANRAWTPLKGQQFAKYVNPDYRHRIAFLEEPCKTRDDSRAFARETGIAIAWDESLREPDFAFVAEEGVRAVVIKPTLTGSLEKVREQVQAAHALGLTAVISSSIESSLGLTQLARIAAWLTPDTIPGLDTLDLMQAQQVRRWPGSTLPVVEVDALERLL</sequence>
<name>MENC_ECO24</name>
<proteinExistence type="inferred from homology"/>
<gene>
    <name evidence="1" type="primary">menC</name>
    <name type="ordered locus">EcE24377A_2557</name>
</gene>
<accession>A7ZP80</accession>
<evidence type="ECO:0000255" key="1">
    <source>
        <dbReference type="HAMAP-Rule" id="MF_00470"/>
    </source>
</evidence>
<organism>
    <name type="scientific">Escherichia coli O139:H28 (strain E24377A / ETEC)</name>
    <dbReference type="NCBI Taxonomy" id="331111"/>
    <lineage>
        <taxon>Bacteria</taxon>
        <taxon>Pseudomonadati</taxon>
        <taxon>Pseudomonadota</taxon>
        <taxon>Gammaproteobacteria</taxon>
        <taxon>Enterobacterales</taxon>
        <taxon>Enterobacteriaceae</taxon>
        <taxon>Escherichia</taxon>
    </lineage>
</organism>
<keyword id="KW-0456">Lyase</keyword>
<keyword id="KW-0460">Magnesium</keyword>
<keyword id="KW-0474">Menaquinone biosynthesis</keyword>
<keyword id="KW-0479">Metal-binding</keyword>
<keyword id="KW-1185">Reference proteome</keyword>
<feature type="chain" id="PRO_1000060376" description="o-succinylbenzoate synthase">
    <location>
        <begin position="1"/>
        <end position="320"/>
    </location>
</feature>
<feature type="active site" description="Proton donor" evidence="1">
    <location>
        <position position="133"/>
    </location>
</feature>
<feature type="active site" description="Proton acceptor" evidence="1">
    <location>
        <position position="235"/>
    </location>
</feature>
<feature type="binding site" evidence="1">
    <location>
        <position position="161"/>
    </location>
    <ligand>
        <name>Mg(2+)</name>
        <dbReference type="ChEBI" id="CHEBI:18420"/>
    </ligand>
</feature>
<feature type="binding site" evidence="1">
    <location>
        <position position="190"/>
    </location>
    <ligand>
        <name>Mg(2+)</name>
        <dbReference type="ChEBI" id="CHEBI:18420"/>
    </ligand>
</feature>
<feature type="binding site" evidence="1">
    <location>
        <position position="213"/>
    </location>
    <ligand>
        <name>Mg(2+)</name>
        <dbReference type="ChEBI" id="CHEBI:18420"/>
    </ligand>
</feature>
<dbReference type="EC" id="4.2.1.113" evidence="1"/>
<dbReference type="EMBL" id="CP000800">
    <property type="protein sequence ID" value="ABV19793.1"/>
    <property type="molecule type" value="Genomic_DNA"/>
</dbReference>
<dbReference type="RefSeq" id="WP_001255609.1">
    <property type="nucleotide sequence ID" value="NC_009801.1"/>
</dbReference>
<dbReference type="SMR" id="A7ZP80"/>
<dbReference type="GeneID" id="75205688"/>
<dbReference type="KEGG" id="ecw:EcE24377A_2557"/>
<dbReference type="HOGENOM" id="CLU_030273_0_1_6"/>
<dbReference type="UniPathway" id="UPA00079"/>
<dbReference type="UniPathway" id="UPA01057">
    <property type="reaction ID" value="UER00165"/>
</dbReference>
<dbReference type="Proteomes" id="UP000001122">
    <property type="component" value="Chromosome"/>
</dbReference>
<dbReference type="GO" id="GO:0000287">
    <property type="term" value="F:magnesium ion binding"/>
    <property type="evidence" value="ECO:0007669"/>
    <property type="project" value="UniProtKB-UniRule"/>
</dbReference>
<dbReference type="GO" id="GO:0043748">
    <property type="term" value="F:O-succinylbenzoate synthase activity"/>
    <property type="evidence" value="ECO:0007669"/>
    <property type="project" value="UniProtKB-EC"/>
</dbReference>
<dbReference type="GO" id="GO:0009234">
    <property type="term" value="P:menaquinone biosynthetic process"/>
    <property type="evidence" value="ECO:0007669"/>
    <property type="project" value="UniProtKB-UniRule"/>
</dbReference>
<dbReference type="CDD" id="cd03320">
    <property type="entry name" value="OSBS"/>
    <property type="match status" value="1"/>
</dbReference>
<dbReference type="FunFam" id="3.20.20.120:FF:000006">
    <property type="entry name" value="o-succinylbenzoate synthase"/>
    <property type="match status" value="1"/>
</dbReference>
<dbReference type="FunFam" id="3.30.390.10:FF:000005">
    <property type="entry name" value="o-succinylbenzoate synthase"/>
    <property type="match status" value="1"/>
</dbReference>
<dbReference type="Gene3D" id="3.20.20.120">
    <property type="entry name" value="Enolase-like C-terminal domain"/>
    <property type="match status" value="1"/>
</dbReference>
<dbReference type="Gene3D" id="3.30.390.10">
    <property type="entry name" value="Enolase-like, N-terminal domain"/>
    <property type="match status" value="1"/>
</dbReference>
<dbReference type="HAMAP" id="MF_00470">
    <property type="entry name" value="MenC_1"/>
    <property type="match status" value="1"/>
</dbReference>
<dbReference type="InterPro" id="IPR036849">
    <property type="entry name" value="Enolase-like_C_sf"/>
</dbReference>
<dbReference type="InterPro" id="IPR029017">
    <property type="entry name" value="Enolase-like_N"/>
</dbReference>
<dbReference type="InterPro" id="IPR029065">
    <property type="entry name" value="Enolase_C-like"/>
</dbReference>
<dbReference type="InterPro" id="IPR013342">
    <property type="entry name" value="Mandelate_racemase_C"/>
</dbReference>
<dbReference type="InterPro" id="IPR010196">
    <property type="entry name" value="OSB_synthase_MenC1"/>
</dbReference>
<dbReference type="InterPro" id="IPR041338">
    <property type="entry name" value="OSBS_N"/>
</dbReference>
<dbReference type="NCBIfam" id="TIGR01927">
    <property type="entry name" value="menC_gam_Gplu"/>
    <property type="match status" value="1"/>
</dbReference>
<dbReference type="NCBIfam" id="NF003473">
    <property type="entry name" value="PRK05105.1"/>
    <property type="match status" value="1"/>
</dbReference>
<dbReference type="PANTHER" id="PTHR48073:SF2">
    <property type="entry name" value="O-SUCCINYLBENZOATE SYNTHASE"/>
    <property type="match status" value="1"/>
</dbReference>
<dbReference type="PANTHER" id="PTHR48073">
    <property type="entry name" value="O-SUCCINYLBENZOATE SYNTHASE-RELATED"/>
    <property type="match status" value="1"/>
</dbReference>
<dbReference type="Pfam" id="PF21508">
    <property type="entry name" value="MenC_N"/>
    <property type="match status" value="1"/>
</dbReference>
<dbReference type="Pfam" id="PF13378">
    <property type="entry name" value="MR_MLE_C"/>
    <property type="match status" value="1"/>
</dbReference>
<dbReference type="SFLD" id="SFLDS00001">
    <property type="entry name" value="Enolase"/>
    <property type="match status" value="1"/>
</dbReference>
<dbReference type="SFLD" id="SFLDF00009">
    <property type="entry name" value="o-succinylbenzoate_synthase"/>
    <property type="match status" value="1"/>
</dbReference>
<dbReference type="SMART" id="SM00922">
    <property type="entry name" value="MR_MLE"/>
    <property type="match status" value="1"/>
</dbReference>
<dbReference type="SUPFAM" id="SSF51604">
    <property type="entry name" value="Enolase C-terminal domain-like"/>
    <property type="match status" value="1"/>
</dbReference>
<dbReference type="SUPFAM" id="SSF54826">
    <property type="entry name" value="Enolase N-terminal domain-like"/>
    <property type="match status" value="1"/>
</dbReference>
<comment type="function">
    <text evidence="1">Converts 2-succinyl-6-hydroxy-2,4-cyclohexadiene-1-carboxylate (SHCHC) to 2-succinylbenzoate (OSB).</text>
</comment>
<comment type="catalytic activity">
    <reaction evidence="1">
        <text>(1R,6R)-6-hydroxy-2-succinyl-cyclohexa-2,4-diene-1-carboxylate = 2-succinylbenzoate + H2O</text>
        <dbReference type="Rhea" id="RHEA:10196"/>
        <dbReference type="ChEBI" id="CHEBI:15377"/>
        <dbReference type="ChEBI" id="CHEBI:18325"/>
        <dbReference type="ChEBI" id="CHEBI:58689"/>
        <dbReference type="EC" id="4.2.1.113"/>
    </reaction>
</comment>
<comment type="cofactor">
    <cofactor evidence="1">
        <name>a divalent metal cation</name>
        <dbReference type="ChEBI" id="CHEBI:60240"/>
    </cofactor>
</comment>
<comment type="pathway">
    <text evidence="1">Quinol/quinone metabolism; 1,4-dihydroxy-2-naphthoate biosynthesis; 1,4-dihydroxy-2-naphthoate from chorismate: step 4/7.</text>
</comment>
<comment type="pathway">
    <text evidence="1">Quinol/quinone metabolism; menaquinone biosynthesis.</text>
</comment>
<comment type="similarity">
    <text evidence="1">Belongs to the mandelate racemase/muconate lactonizing enzyme family. MenC type 1 subfamily.</text>
</comment>
<reference key="1">
    <citation type="journal article" date="2008" name="J. Bacteriol.">
        <title>The pangenome structure of Escherichia coli: comparative genomic analysis of E. coli commensal and pathogenic isolates.</title>
        <authorList>
            <person name="Rasko D.A."/>
            <person name="Rosovitz M.J."/>
            <person name="Myers G.S.A."/>
            <person name="Mongodin E.F."/>
            <person name="Fricke W.F."/>
            <person name="Gajer P."/>
            <person name="Crabtree J."/>
            <person name="Sebaihia M."/>
            <person name="Thomson N.R."/>
            <person name="Chaudhuri R."/>
            <person name="Henderson I.R."/>
            <person name="Sperandio V."/>
            <person name="Ravel J."/>
        </authorList>
    </citation>
    <scope>NUCLEOTIDE SEQUENCE [LARGE SCALE GENOMIC DNA]</scope>
    <source>
        <strain>E24377A / ETEC</strain>
    </source>
</reference>
<protein>
    <recommendedName>
        <fullName evidence="1">o-succinylbenzoate synthase</fullName>
        <shortName evidence="1">OSB synthase</shortName>
        <shortName evidence="1">OSBS</shortName>
        <ecNumber evidence="1">4.2.1.113</ecNumber>
    </recommendedName>
    <alternativeName>
        <fullName evidence="1">4-(2'-carboxyphenyl)-4-oxybutyric acid synthase</fullName>
    </alternativeName>
    <alternativeName>
        <fullName evidence="1">o-succinylbenzoic acid synthase</fullName>
    </alternativeName>
</protein>